<keyword id="KW-0028">Amino-acid biosynthesis</keyword>
<keyword id="KW-0055">Arginine biosynthesis</keyword>
<keyword id="KW-0067">ATP-binding</keyword>
<keyword id="KW-0963">Cytoplasm</keyword>
<keyword id="KW-0418">Kinase</keyword>
<keyword id="KW-0547">Nucleotide-binding</keyword>
<keyword id="KW-1185">Reference proteome</keyword>
<keyword id="KW-0808">Transferase</keyword>
<proteinExistence type="inferred from homology"/>
<name>ARGB_METB6</name>
<reference key="1">
    <citation type="journal article" date="2015" name="Microbiology">
        <title>Genome of Methanoregula boonei 6A8 reveals adaptations to oligotrophic peatland environments.</title>
        <authorList>
            <person name="Braeuer S."/>
            <person name="Cadillo-Quiroz H."/>
            <person name="Kyrpides N."/>
            <person name="Woyke T."/>
            <person name="Goodwin L."/>
            <person name="Detter C."/>
            <person name="Podell S."/>
            <person name="Yavitt J.B."/>
            <person name="Zinder S.H."/>
        </authorList>
    </citation>
    <scope>NUCLEOTIDE SEQUENCE [LARGE SCALE GENOMIC DNA]</scope>
    <source>
        <strain>DSM 21154 / JCM 14090 / 6A8</strain>
    </source>
</reference>
<protein>
    <recommendedName>
        <fullName evidence="1">Acetylglutamate kinase</fullName>
        <ecNumber evidence="1">2.7.2.8</ecNumber>
    </recommendedName>
    <alternativeName>
        <fullName evidence="1">N-acetyl-L-glutamate 5-phosphotransferase</fullName>
    </alternativeName>
    <alternativeName>
        <fullName evidence="1">NAG kinase</fullName>
        <shortName evidence="1">NAGK</shortName>
    </alternativeName>
</protein>
<gene>
    <name evidence="1" type="primary">argB</name>
    <name type="ordered locus">Mboo_0071</name>
</gene>
<evidence type="ECO:0000255" key="1">
    <source>
        <dbReference type="HAMAP-Rule" id="MF_00082"/>
    </source>
</evidence>
<feature type="chain" id="PRO_0000335676" description="Acetylglutamate kinase">
    <location>
        <begin position="1"/>
        <end position="291"/>
    </location>
</feature>
<feature type="binding site" evidence="1">
    <location>
        <begin position="61"/>
        <end position="62"/>
    </location>
    <ligand>
        <name>substrate</name>
    </ligand>
</feature>
<feature type="binding site" evidence="1">
    <location>
        <position position="83"/>
    </location>
    <ligand>
        <name>substrate</name>
    </ligand>
</feature>
<feature type="binding site" evidence="1">
    <location>
        <position position="187"/>
    </location>
    <ligand>
        <name>substrate</name>
    </ligand>
</feature>
<feature type="site" description="Transition state stabilizer" evidence="1">
    <location>
        <position position="26"/>
    </location>
</feature>
<feature type="site" description="Transition state stabilizer" evidence="1">
    <location>
        <position position="248"/>
    </location>
</feature>
<sequence length="291" mass="31261">MMKREDVLMEALPYIQQFHGKTIVIKLGGHAMVDPEVLENAIKDAVLLHYVGIRVVLVHGGGPEITEKMKALGKESVFVGGLRVTDQETLEIAQMVLVGKINKGIISLIAKCGAKGVGLSGSDGNIILAKKMDLQKVNVQGVEQEVDLGHVGEIEWIDPSLLTTLLDRDYIPVISPIAIDRYGGSLNINADTAAGDIAIALKAYKLINMTDVDGVMDAKRTHVFRKLSITEANALLASGAIGEGMIPKVSSVIKAVENGVKYSHIINGNVEHNLILELFTHEGVGTMISLQ</sequence>
<comment type="function">
    <text evidence="1">Catalyzes the ATP-dependent phosphorylation of N-acetyl-L-glutamate.</text>
</comment>
<comment type="catalytic activity">
    <reaction evidence="1">
        <text>N-acetyl-L-glutamate + ATP = N-acetyl-L-glutamyl 5-phosphate + ADP</text>
        <dbReference type="Rhea" id="RHEA:14629"/>
        <dbReference type="ChEBI" id="CHEBI:30616"/>
        <dbReference type="ChEBI" id="CHEBI:44337"/>
        <dbReference type="ChEBI" id="CHEBI:57936"/>
        <dbReference type="ChEBI" id="CHEBI:456216"/>
        <dbReference type="EC" id="2.7.2.8"/>
    </reaction>
</comment>
<comment type="pathway">
    <text evidence="1">Amino-acid biosynthesis; L-arginine biosynthesis; N(2)-acetyl-L-ornithine from L-glutamate: step 2/4.</text>
</comment>
<comment type="subcellular location">
    <subcellularLocation>
        <location evidence="1">Cytoplasm</location>
    </subcellularLocation>
</comment>
<comment type="similarity">
    <text evidence="1">Belongs to the acetylglutamate kinase family. ArgB subfamily.</text>
</comment>
<dbReference type="EC" id="2.7.2.8" evidence="1"/>
<dbReference type="EMBL" id="CP000780">
    <property type="protein sequence ID" value="ABS54595.1"/>
    <property type="molecule type" value="Genomic_DNA"/>
</dbReference>
<dbReference type="SMR" id="A7I4D4"/>
<dbReference type="STRING" id="456442.Mboo_0071"/>
<dbReference type="KEGG" id="mbn:Mboo_0071"/>
<dbReference type="eggNOG" id="arCOG00862">
    <property type="taxonomic scope" value="Archaea"/>
</dbReference>
<dbReference type="HOGENOM" id="CLU_053680_0_0_2"/>
<dbReference type="UniPathway" id="UPA00068">
    <property type="reaction ID" value="UER00107"/>
</dbReference>
<dbReference type="Proteomes" id="UP000002408">
    <property type="component" value="Chromosome"/>
</dbReference>
<dbReference type="GO" id="GO:0005737">
    <property type="term" value="C:cytoplasm"/>
    <property type="evidence" value="ECO:0007669"/>
    <property type="project" value="UniProtKB-SubCell"/>
</dbReference>
<dbReference type="GO" id="GO:0003991">
    <property type="term" value="F:acetylglutamate kinase activity"/>
    <property type="evidence" value="ECO:0007669"/>
    <property type="project" value="UniProtKB-UniRule"/>
</dbReference>
<dbReference type="GO" id="GO:0005524">
    <property type="term" value="F:ATP binding"/>
    <property type="evidence" value="ECO:0007669"/>
    <property type="project" value="UniProtKB-UniRule"/>
</dbReference>
<dbReference type="GO" id="GO:0042450">
    <property type="term" value="P:arginine biosynthetic process via ornithine"/>
    <property type="evidence" value="ECO:0007669"/>
    <property type="project" value="UniProtKB-UniRule"/>
</dbReference>
<dbReference type="GO" id="GO:0006526">
    <property type="term" value="P:L-arginine biosynthetic process"/>
    <property type="evidence" value="ECO:0007669"/>
    <property type="project" value="UniProtKB-UniPathway"/>
</dbReference>
<dbReference type="CDD" id="cd04250">
    <property type="entry name" value="AAK_NAGK-C"/>
    <property type="match status" value="1"/>
</dbReference>
<dbReference type="FunFam" id="3.40.1160.10:FF:000004">
    <property type="entry name" value="Acetylglutamate kinase"/>
    <property type="match status" value="1"/>
</dbReference>
<dbReference type="Gene3D" id="3.40.1160.10">
    <property type="entry name" value="Acetylglutamate kinase-like"/>
    <property type="match status" value="1"/>
</dbReference>
<dbReference type="HAMAP" id="MF_00082">
    <property type="entry name" value="ArgB"/>
    <property type="match status" value="1"/>
</dbReference>
<dbReference type="InterPro" id="IPR036393">
    <property type="entry name" value="AceGlu_kinase-like_sf"/>
</dbReference>
<dbReference type="InterPro" id="IPR004662">
    <property type="entry name" value="AcgluKinase_fam"/>
</dbReference>
<dbReference type="InterPro" id="IPR037528">
    <property type="entry name" value="ArgB"/>
</dbReference>
<dbReference type="InterPro" id="IPR001048">
    <property type="entry name" value="Asp/Glu/Uridylate_kinase"/>
</dbReference>
<dbReference type="InterPro" id="IPR001057">
    <property type="entry name" value="Glu/AcGlu_kinase"/>
</dbReference>
<dbReference type="InterPro" id="IPR041727">
    <property type="entry name" value="NAGK-C"/>
</dbReference>
<dbReference type="NCBIfam" id="TIGR00761">
    <property type="entry name" value="argB"/>
    <property type="match status" value="1"/>
</dbReference>
<dbReference type="PANTHER" id="PTHR23342">
    <property type="entry name" value="N-ACETYLGLUTAMATE SYNTHASE"/>
    <property type="match status" value="1"/>
</dbReference>
<dbReference type="PANTHER" id="PTHR23342:SF0">
    <property type="entry name" value="N-ACETYLGLUTAMATE SYNTHASE, MITOCHONDRIAL"/>
    <property type="match status" value="1"/>
</dbReference>
<dbReference type="Pfam" id="PF00696">
    <property type="entry name" value="AA_kinase"/>
    <property type="match status" value="1"/>
</dbReference>
<dbReference type="PIRSF" id="PIRSF000728">
    <property type="entry name" value="NAGK"/>
    <property type="match status" value="1"/>
</dbReference>
<dbReference type="PRINTS" id="PR00474">
    <property type="entry name" value="GLU5KINASE"/>
</dbReference>
<dbReference type="SUPFAM" id="SSF53633">
    <property type="entry name" value="Carbamate kinase-like"/>
    <property type="match status" value="1"/>
</dbReference>
<accession>A7I4D4</accession>
<organism>
    <name type="scientific">Methanoregula boonei (strain DSM 21154 / JCM 14090 / 6A8)</name>
    <dbReference type="NCBI Taxonomy" id="456442"/>
    <lineage>
        <taxon>Archaea</taxon>
        <taxon>Methanobacteriati</taxon>
        <taxon>Methanobacteriota</taxon>
        <taxon>Stenosarchaea group</taxon>
        <taxon>Methanomicrobia</taxon>
        <taxon>Methanomicrobiales</taxon>
        <taxon>Methanoregulaceae</taxon>
        <taxon>Methanoregula</taxon>
    </lineage>
</organism>